<evidence type="ECO:0000255" key="1">
    <source>
        <dbReference type="HAMAP-Rule" id="MF_01246"/>
    </source>
</evidence>
<accession>Q8EP46</accession>
<feature type="chain" id="PRO_0000051597" description="Carbohydrate deacetylase">
    <location>
        <begin position="1"/>
        <end position="230"/>
    </location>
</feature>
<feature type="binding site" evidence="1">
    <location>
        <position position="59"/>
    </location>
    <ligand>
        <name>Mg(2+)</name>
        <dbReference type="ChEBI" id="CHEBI:18420"/>
    </ligand>
</feature>
<feature type="binding site" evidence="1">
    <location>
        <position position="123"/>
    </location>
    <ligand>
        <name>Mg(2+)</name>
        <dbReference type="ChEBI" id="CHEBI:18420"/>
    </ligand>
</feature>
<organism>
    <name type="scientific">Oceanobacillus iheyensis (strain DSM 14371 / CIP 107618 / JCM 11309 / KCTC 3954 / HTE831)</name>
    <dbReference type="NCBI Taxonomy" id="221109"/>
    <lineage>
        <taxon>Bacteria</taxon>
        <taxon>Bacillati</taxon>
        <taxon>Bacillota</taxon>
        <taxon>Bacilli</taxon>
        <taxon>Bacillales</taxon>
        <taxon>Bacillaceae</taxon>
        <taxon>Oceanobacillus</taxon>
    </lineage>
</organism>
<name>YDJC_OCEIH</name>
<dbReference type="EC" id="3.5.1.-" evidence="1"/>
<dbReference type="EMBL" id="BA000028">
    <property type="protein sequence ID" value="BAC14227.1"/>
    <property type="molecule type" value="Genomic_DNA"/>
</dbReference>
<dbReference type="RefSeq" id="WP_011066663.1">
    <property type="nucleotide sequence ID" value="NC_004193.1"/>
</dbReference>
<dbReference type="SMR" id="Q8EP46"/>
<dbReference type="STRING" id="221109.gene:10734519"/>
<dbReference type="KEGG" id="oih:OB2271"/>
<dbReference type="eggNOG" id="COG3394">
    <property type="taxonomic scope" value="Bacteria"/>
</dbReference>
<dbReference type="HOGENOM" id="CLU_064244_4_0_9"/>
<dbReference type="OrthoDB" id="9774177at2"/>
<dbReference type="PhylomeDB" id="Q8EP46"/>
<dbReference type="Proteomes" id="UP000000822">
    <property type="component" value="Chromosome"/>
</dbReference>
<dbReference type="GO" id="GO:0019213">
    <property type="term" value="F:deacetylase activity"/>
    <property type="evidence" value="ECO:0007669"/>
    <property type="project" value="TreeGrafter"/>
</dbReference>
<dbReference type="GO" id="GO:0016811">
    <property type="term" value="F:hydrolase activity, acting on carbon-nitrogen (but not peptide) bonds, in linear amides"/>
    <property type="evidence" value="ECO:0007669"/>
    <property type="project" value="UniProtKB-UniRule"/>
</dbReference>
<dbReference type="GO" id="GO:0046872">
    <property type="term" value="F:metal ion binding"/>
    <property type="evidence" value="ECO:0007669"/>
    <property type="project" value="UniProtKB-KW"/>
</dbReference>
<dbReference type="GO" id="GO:0000272">
    <property type="term" value="P:polysaccharide catabolic process"/>
    <property type="evidence" value="ECO:0007669"/>
    <property type="project" value="InterPro"/>
</dbReference>
<dbReference type="CDD" id="cd10803">
    <property type="entry name" value="YdjC_EF3048_like"/>
    <property type="match status" value="1"/>
</dbReference>
<dbReference type="Gene3D" id="3.20.20.370">
    <property type="entry name" value="Glycoside hydrolase/deacetylase"/>
    <property type="match status" value="1"/>
</dbReference>
<dbReference type="HAMAP" id="MF_01246">
    <property type="entry name" value="COD"/>
    <property type="match status" value="1"/>
</dbReference>
<dbReference type="InterPro" id="IPR022948">
    <property type="entry name" value="COD_ChbG_bac"/>
</dbReference>
<dbReference type="InterPro" id="IPR011330">
    <property type="entry name" value="Glyco_hydro/deAcase_b/a-brl"/>
</dbReference>
<dbReference type="InterPro" id="IPR006879">
    <property type="entry name" value="YdjC-like"/>
</dbReference>
<dbReference type="NCBIfam" id="NF002559">
    <property type="entry name" value="PRK02134.1"/>
    <property type="match status" value="1"/>
</dbReference>
<dbReference type="PANTHER" id="PTHR31609:SF1">
    <property type="entry name" value="CARBOHYDRATE DEACETYLASE"/>
    <property type="match status" value="1"/>
</dbReference>
<dbReference type="PANTHER" id="PTHR31609">
    <property type="entry name" value="YDJC DEACETYLASE FAMILY MEMBER"/>
    <property type="match status" value="1"/>
</dbReference>
<dbReference type="Pfam" id="PF04794">
    <property type="entry name" value="YdjC"/>
    <property type="match status" value="1"/>
</dbReference>
<dbReference type="SUPFAM" id="SSF88713">
    <property type="entry name" value="Glycoside hydrolase/deacetylase"/>
    <property type="match status" value="1"/>
</dbReference>
<comment type="function">
    <text evidence="1">Probably catalyzes the deacetylation of acetylated carbohydrates an important step in the degradation of oligosaccharides.</text>
</comment>
<comment type="cofactor">
    <cofactor evidence="1">
        <name>Mg(2+)</name>
        <dbReference type="ChEBI" id="CHEBI:18420"/>
    </cofactor>
</comment>
<comment type="subunit">
    <text evidence="1">Homodimer.</text>
</comment>
<comment type="similarity">
    <text evidence="1">Belongs to the YdjC deacetylase family.</text>
</comment>
<keyword id="KW-0119">Carbohydrate metabolism</keyword>
<keyword id="KW-0378">Hydrolase</keyword>
<keyword id="KW-0460">Magnesium</keyword>
<keyword id="KW-0479">Metal-binding</keyword>
<keyword id="KW-1185">Reference proteome</keyword>
<gene>
    <name type="ordered locus">OB2271</name>
</gene>
<proteinExistence type="inferred from homology"/>
<protein>
    <recommendedName>
        <fullName evidence="1">Carbohydrate deacetylase</fullName>
        <ecNumber evidence="1">3.5.1.-</ecNumber>
    </recommendedName>
</protein>
<reference key="1">
    <citation type="journal article" date="2002" name="Nucleic Acids Res.">
        <title>Genome sequence of Oceanobacillus iheyensis isolated from the Iheya Ridge and its unexpected adaptive capabilities to extreme environments.</title>
        <authorList>
            <person name="Takami H."/>
            <person name="Takaki Y."/>
            <person name="Uchiyama I."/>
        </authorList>
    </citation>
    <scope>NUCLEOTIDE SEQUENCE [LARGE SCALE GENOMIC DNA]</scope>
    <source>
        <strain>DSM 14371 / CIP 107618 / JCM 11309 / KCTC 3954 / HTE831</strain>
    </source>
</reference>
<sequence>MRVEINADDYGLTKGVTDGIIKAHRGGCVTSTTLMMNGLSVEYAVEQAKSNPALKVGIHLVLTWGRPISNDVASLVQSNGKFRYTSSYREMDPPSLADVEKEWRAQIEEFKKTGLTLNHIDSHHHIHAWSPLTDVIIKLAKEFEVPVRYADTLKDYPEICWTEKIWVQFYQDGVNDNLFEQLKEEKVRSLEIMTHPGFVDEDLKENSSYLFTREKEVDVLCSIQIPEWVE</sequence>